<dbReference type="EMBL" id="AJ245877">
    <property type="protein sequence ID" value="CAC21572.1"/>
    <property type="molecule type" value="mRNA"/>
</dbReference>
<dbReference type="EMBL" id="BC013643">
    <property type="protein sequence ID" value="AAH13643.1"/>
    <property type="molecule type" value="mRNA"/>
</dbReference>
<dbReference type="EMBL" id="BC023982">
    <property type="protein sequence ID" value="AAH23982.1"/>
    <property type="molecule type" value="mRNA"/>
</dbReference>
<dbReference type="CCDS" id="CCDS4221.1"/>
<dbReference type="RefSeq" id="NP_115788.1">
    <property type="nucleotide sequence ID" value="NM_032412.4"/>
</dbReference>
<dbReference type="SMR" id="Q9H1C7"/>
<dbReference type="BioGRID" id="124070">
    <property type="interactions" value="23"/>
</dbReference>
<dbReference type="FunCoup" id="Q9H1C7">
    <property type="interactions" value="173"/>
</dbReference>
<dbReference type="IntAct" id="Q9H1C7">
    <property type="interactions" value="13"/>
</dbReference>
<dbReference type="STRING" id="9606.ENSP00000261811"/>
<dbReference type="GlyGen" id="Q9H1C7">
    <property type="glycosylation" value="1 site"/>
</dbReference>
<dbReference type="iPTMnet" id="Q9H1C7"/>
<dbReference type="PhosphoSitePlus" id="Q9H1C7"/>
<dbReference type="SwissPalm" id="Q9H1C7"/>
<dbReference type="BioMuta" id="CYSTM1"/>
<dbReference type="jPOST" id="Q9H1C7"/>
<dbReference type="MassIVE" id="Q9H1C7"/>
<dbReference type="PaxDb" id="9606-ENSP00000261811"/>
<dbReference type="PeptideAtlas" id="Q9H1C7"/>
<dbReference type="ProteomicsDB" id="80399"/>
<dbReference type="Pumba" id="Q9H1C7"/>
<dbReference type="Antibodypedia" id="26841">
    <property type="antibodies" value="18 antibodies from 10 providers"/>
</dbReference>
<dbReference type="DNASU" id="84418"/>
<dbReference type="Ensembl" id="ENST00000261811.6">
    <property type="protein sequence ID" value="ENSP00000261811.4"/>
    <property type="gene ID" value="ENSG00000120306.11"/>
</dbReference>
<dbReference type="GeneID" id="84418"/>
<dbReference type="KEGG" id="hsa:84418"/>
<dbReference type="MANE-Select" id="ENST00000261811.6">
    <property type="protein sequence ID" value="ENSP00000261811.4"/>
    <property type="RefSeq nucleotide sequence ID" value="NM_032412.4"/>
    <property type="RefSeq protein sequence ID" value="NP_115788.1"/>
</dbReference>
<dbReference type="UCSC" id="uc003lfd.4">
    <property type="organism name" value="human"/>
</dbReference>
<dbReference type="AGR" id="HGNC:30239"/>
<dbReference type="CTD" id="84418"/>
<dbReference type="DisGeNET" id="84418"/>
<dbReference type="GeneCards" id="CYSTM1"/>
<dbReference type="HGNC" id="HGNC:30239">
    <property type="gene designation" value="CYSTM1"/>
</dbReference>
<dbReference type="HPA" id="ENSG00000120306">
    <property type="expression patterns" value="Tissue enhanced (stomach)"/>
</dbReference>
<dbReference type="neXtProt" id="NX_Q9H1C7"/>
<dbReference type="OpenTargets" id="ENSG00000120306"/>
<dbReference type="PharmGKB" id="PA162380028"/>
<dbReference type="VEuPathDB" id="HostDB:ENSG00000120306"/>
<dbReference type="eggNOG" id="ENOG502S7AZ">
    <property type="taxonomic scope" value="Eukaryota"/>
</dbReference>
<dbReference type="GeneTree" id="ENSGT00500000045016"/>
<dbReference type="HOGENOM" id="CLU_155323_0_0_1"/>
<dbReference type="InParanoid" id="Q9H1C7"/>
<dbReference type="PAN-GO" id="Q9H1C7">
    <property type="GO annotations" value="0 GO annotations based on evolutionary models"/>
</dbReference>
<dbReference type="TreeFam" id="TF332352"/>
<dbReference type="PathwayCommons" id="Q9H1C7"/>
<dbReference type="Reactome" id="R-HSA-6798695">
    <property type="pathway name" value="Neutrophil degranulation"/>
</dbReference>
<dbReference type="SignaLink" id="Q9H1C7"/>
<dbReference type="BioGRID-ORCS" id="84418">
    <property type="hits" value="10 hits in 1148 CRISPR screens"/>
</dbReference>
<dbReference type="ChiTaRS" id="CYSTM1">
    <property type="organism name" value="human"/>
</dbReference>
<dbReference type="GenomeRNAi" id="84418"/>
<dbReference type="Pharos" id="Q9H1C7">
    <property type="development level" value="Tdark"/>
</dbReference>
<dbReference type="PRO" id="PR:Q9H1C7"/>
<dbReference type="Proteomes" id="UP000005640">
    <property type="component" value="Chromosome 5"/>
</dbReference>
<dbReference type="RNAct" id="Q9H1C7">
    <property type="molecule type" value="protein"/>
</dbReference>
<dbReference type="Bgee" id="ENSG00000120306">
    <property type="expression patterns" value="Expressed in pylorus and 184 other cell types or tissues"/>
</dbReference>
<dbReference type="ExpressionAtlas" id="Q9H1C7">
    <property type="expression patterns" value="baseline and differential"/>
</dbReference>
<dbReference type="GO" id="GO:0070062">
    <property type="term" value="C:extracellular exosome"/>
    <property type="evidence" value="ECO:0007005"/>
    <property type="project" value="UniProtKB"/>
</dbReference>
<dbReference type="GO" id="GO:0005886">
    <property type="term" value="C:plasma membrane"/>
    <property type="evidence" value="ECO:0000304"/>
    <property type="project" value="Reactome"/>
</dbReference>
<dbReference type="GO" id="GO:0070821">
    <property type="term" value="C:tertiary granule membrane"/>
    <property type="evidence" value="ECO:0000304"/>
    <property type="project" value="Reactome"/>
</dbReference>
<dbReference type="InterPro" id="IPR043240">
    <property type="entry name" value="CYSTM1-like"/>
</dbReference>
<dbReference type="PANTHER" id="PTHR47564">
    <property type="entry name" value="CYSTEINE-RICH AND TRANSMEMBRANE DOMAIN-CONTAINING PROTEIN 1"/>
    <property type="match status" value="1"/>
</dbReference>
<dbReference type="PANTHER" id="PTHR47564:SF1">
    <property type="entry name" value="CYSTEINE-RICH AND TRANSMEMBRANE DOMAIN-CONTAINING PROTEIN 1"/>
    <property type="match status" value="1"/>
</dbReference>
<comment type="interaction">
    <interactant intactId="EBI-12867082">
        <id>Q9H1C7</id>
    </interactant>
    <interactant intactId="EBI-747185">
        <id>O95817</id>
        <label>BAG3</label>
    </interactant>
    <organismsDiffer>false</organismsDiffer>
    <experiments>3</experiments>
</comment>
<comment type="interaction">
    <interactant intactId="EBI-12867082">
        <id>Q9H1C7</id>
    </interactant>
    <interactant intactId="EBI-10238936">
        <id>Q17RD7</id>
        <label>SYT16</label>
    </interactant>
    <organismsDiffer>false</organismsDiffer>
    <experiments>3</experiments>
</comment>
<comment type="subcellular location">
    <subcellularLocation>
        <location evidence="4">Membrane</location>
        <topology evidence="4">Single-pass membrane protein</topology>
    </subcellularLocation>
</comment>
<comment type="similarity">
    <text evidence="4">Belongs to the CYSTM1 family.</text>
</comment>
<protein>
    <recommendedName>
        <fullName>Cysteine-rich and transmembrane domain-containing protein 1</fullName>
    </recommendedName>
</protein>
<feature type="chain" id="PRO_0000296358" description="Cysteine-rich and transmembrane domain-containing protein 1">
    <location>
        <begin position="1"/>
        <end position="97"/>
    </location>
</feature>
<feature type="transmembrane region" description="Helical" evidence="1">
    <location>
        <begin position="74"/>
        <end position="91"/>
    </location>
</feature>
<feature type="region of interest" description="Disordered" evidence="2">
    <location>
        <begin position="1"/>
        <end position="61"/>
    </location>
</feature>
<feature type="compositionally biased region" description="Pro residues" evidence="2">
    <location>
        <begin position="1"/>
        <end position="40"/>
    </location>
</feature>
<feature type="compositionally biased region" description="Low complexity" evidence="2">
    <location>
        <begin position="41"/>
        <end position="50"/>
    </location>
</feature>
<feature type="sequence variant" id="VAR_034629" description="In dbSNP:rs17852164." evidence="3">
    <original>C</original>
    <variation>S</variation>
    <location>
        <position position="90"/>
    </location>
</feature>
<keyword id="KW-0472">Membrane</keyword>
<keyword id="KW-1267">Proteomics identification</keyword>
<keyword id="KW-1185">Reference proteome</keyword>
<keyword id="KW-0812">Transmembrane</keyword>
<keyword id="KW-1133">Transmembrane helix</keyword>
<reference key="1">
    <citation type="submission" date="1999-08" db="EMBL/GenBank/DDBJ databases">
        <title>Full length sequencing of some human and murine muscular transcripts (Telethon Italy project B41).</title>
        <authorList>
            <person name="Ievolella C."/>
            <person name="Zara I."/>
            <person name="Millino C."/>
            <person name="Faulkner G."/>
            <person name="Lanfranchi G."/>
        </authorList>
    </citation>
    <scope>NUCLEOTIDE SEQUENCE [LARGE SCALE MRNA]</scope>
    <source>
        <tissue>Skeletal muscle</tissue>
    </source>
</reference>
<reference key="2">
    <citation type="journal article" date="2004" name="Genome Res.">
        <title>The status, quality, and expansion of the NIH full-length cDNA project: the Mammalian Gene Collection (MGC).</title>
        <authorList>
            <consortium name="The MGC Project Team"/>
        </authorList>
    </citation>
    <scope>NUCLEOTIDE SEQUENCE [LARGE SCALE MRNA]</scope>
    <scope>VARIANT SER-90</scope>
    <source>
        <tissue>Brain</tissue>
        <tissue>Skin</tissue>
    </source>
</reference>
<reference key="3">
    <citation type="journal article" date="2011" name="BMC Syst. Biol.">
        <title>Initial characterization of the human central proteome.</title>
        <authorList>
            <person name="Burkard T.R."/>
            <person name="Planyavsky M."/>
            <person name="Kaupe I."/>
            <person name="Breitwieser F.P."/>
            <person name="Buerckstuemmer T."/>
            <person name="Bennett K.L."/>
            <person name="Superti-Furga G."/>
            <person name="Colinge J."/>
        </authorList>
    </citation>
    <scope>IDENTIFICATION BY MASS SPECTROMETRY [LARGE SCALE ANALYSIS]</scope>
</reference>
<name>CYTM1_HUMAN</name>
<accession>Q9H1C7</accession>
<accession>Q8TBA5</accession>
<proteinExistence type="evidence at protein level"/>
<organism>
    <name type="scientific">Homo sapiens</name>
    <name type="common">Human</name>
    <dbReference type="NCBI Taxonomy" id="9606"/>
    <lineage>
        <taxon>Eukaryota</taxon>
        <taxon>Metazoa</taxon>
        <taxon>Chordata</taxon>
        <taxon>Craniata</taxon>
        <taxon>Vertebrata</taxon>
        <taxon>Euteleostomi</taxon>
        <taxon>Mammalia</taxon>
        <taxon>Eutheria</taxon>
        <taxon>Euarchontoglires</taxon>
        <taxon>Primates</taxon>
        <taxon>Haplorrhini</taxon>
        <taxon>Catarrhini</taxon>
        <taxon>Hominidae</taxon>
        <taxon>Homo</taxon>
    </lineage>
</organism>
<sequence>MNQENPPPYPGPGPTAPYPPYPPQPMGPGPMGGPYPPPQGYPYQGYPQYGWQGGPQEPPKTTVYVVEDQRRDELGPSTCLTACWTALCCCCLWDMLT</sequence>
<gene>
    <name type="primary">CYSTM1</name>
    <name type="synonym">C5orf32</name>
    <name type="ORF">ORF1-FL49</name>
</gene>
<evidence type="ECO:0000255" key="1"/>
<evidence type="ECO:0000256" key="2">
    <source>
        <dbReference type="SAM" id="MobiDB-lite"/>
    </source>
</evidence>
<evidence type="ECO:0000269" key="3">
    <source>
    </source>
</evidence>
<evidence type="ECO:0000305" key="4"/>